<accession>P0A8E2</accession>
<accession>P75950</accession>
<gene>
    <name type="primary">ycfP</name>
    <name type="ordered locus">c1381</name>
</gene>
<keyword id="KW-1185">Reference proteome</keyword>
<organism>
    <name type="scientific">Escherichia coli O6:H1 (strain CFT073 / ATCC 700928 / UPEC)</name>
    <dbReference type="NCBI Taxonomy" id="199310"/>
    <lineage>
        <taxon>Bacteria</taxon>
        <taxon>Pseudomonadati</taxon>
        <taxon>Pseudomonadota</taxon>
        <taxon>Gammaproteobacteria</taxon>
        <taxon>Enterobacterales</taxon>
        <taxon>Enterobacteriaceae</taxon>
        <taxon>Escherichia</taxon>
    </lineage>
</organism>
<proteinExistence type="inferred from homology"/>
<feature type="chain" id="PRO_0000070317" description="UPF0227 protein YcfP">
    <location>
        <begin position="1"/>
        <end position="180"/>
    </location>
</feature>
<protein>
    <recommendedName>
        <fullName>UPF0227 protein YcfP</fullName>
    </recommendedName>
</protein>
<sequence length="180" mass="21226">MIIYLHGFDSNSPGNHEKVLQLQFIDPDVRLISYSTRHPKHDMQHLLKEVDKMLQLNVDERPLICGVGLGGYWAERIGFLCDIRQVIFNPNLFPYENMEGKIDRPEEYADIATKCVTNFREKNRDRCLVILSRNDEALNSQRTSEELHHYYEIVWDEEQTHKFKNISPHLQRIKAFKTLG</sequence>
<evidence type="ECO:0000305" key="1"/>
<comment type="similarity">
    <text evidence="1">Belongs to the UPF0227 family.</text>
</comment>
<comment type="sequence caution" evidence="1">
    <conflict type="erroneous initiation">
        <sequence resource="EMBL-CDS" id="AAN79851"/>
    </conflict>
</comment>
<dbReference type="EMBL" id="AE014075">
    <property type="protein sequence ID" value="AAN79851.1"/>
    <property type="status" value="ALT_INIT"/>
    <property type="molecule type" value="Genomic_DNA"/>
</dbReference>
<dbReference type="RefSeq" id="WP_000587933.1">
    <property type="nucleotide sequence ID" value="NZ_CP051263.1"/>
</dbReference>
<dbReference type="SMR" id="P0A8E2"/>
<dbReference type="STRING" id="199310.c1381"/>
<dbReference type="ESTHER" id="ecoli-ycfp">
    <property type="family name" value="abh_upf00227"/>
</dbReference>
<dbReference type="GeneID" id="93776300"/>
<dbReference type="KEGG" id="ecc:c1381"/>
<dbReference type="eggNOG" id="COG3150">
    <property type="taxonomic scope" value="Bacteria"/>
</dbReference>
<dbReference type="HOGENOM" id="CLU_128769_0_0_6"/>
<dbReference type="Proteomes" id="UP000001410">
    <property type="component" value="Chromosome"/>
</dbReference>
<dbReference type="FunFam" id="3.40.50.1820:FF:000007">
    <property type="entry name" value="UPF0227 protein YcfP"/>
    <property type="match status" value="1"/>
</dbReference>
<dbReference type="Gene3D" id="3.40.50.1820">
    <property type="entry name" value="alpha/beta hydrolase"/>
    <property type="match status" value="1"/>
</dbReference>
<dbReference type="HAMAP" id="MF_01047">
    <property type="entry name" value="UPF0227"/>
    <property type="match status" value="1"/>
</dbReference>
<dbReference type="InterPro" id="IPR029058">
    <property type="entry name" value="AB_hydrolase_fold"/>
</dbReference>
<dbReference type="InterPro" id="IPR022987">
    <property type="entry name" value="UPF0227"/>
</dbReference>
<dbReference type="InterPro" id="IPR008886">
    <property type="entry name" value="UPF0227/Esterase_YqiA"/>
</dbReference>
<dbReference type="NCBIfam" id="NF003431">
    <property type="entry name" value="PRK04940.1"/>
    <property type="match status" value="1"/>
</dbReference>
<dbReference type="PANTHER" id="PTHR35602">
    <property type="entry name" value="ESTERASE YQIA-RELATED"/>
    <property type="match status" value="1"/>
</dbReference>
<dbReference type="PANTHER" id="PTHR35602:SF2">
    <property type="entry name" value="UPF0227 PROTEIN YCFP"/>
    <property type="match status" value="1"/>
</dbReference>
<dbReference type="Pfam" id="PF05728">
    <property type="entry name" value="UPF0227"/>
    <property type="match status" value="1"/>
</dbReference>
<dbReference type="SUPFAM" id="SSF53474">
    <property type="entry name" value="alpha/beta-Hydrolases"/>
    <property type="match status" value="1"/>
</dbReference>
<reference key="1">
    <citation type="journal article" date="2002" name="Proc. Natl. Acad. Sci. U.S.A.">
        <title>Extensive mosaic structure revealed by the complete genome sequence of uropathogenic Escherichia coli.</title>
        <authorList>
            <person name="Welch R.A."/>
            <person name="Burland V."/>
            <person name="Plunkett G. III"/>
            <person name="Redford P."/>
            <person name="Roesch P."/>
            <person name="Rasko D."/>
            <person name="Buckles E.L."/>
            <person name="Liou S.-R."/>
            <person name="Boutin A."/>
            <person name="Hackett J."/>
            <person name="Stroud D."/>
            <person name="Mayhew G.F."/>
            <person name="Rose D.J."/>
            <person name="Zhou S."/>
            <person name="Schwartz D.C."/>
            <person name="Perna N.T."/>
            <person name="Mobley H.L.T."/>
            <person name="Donnenberg M.S."/>
            <person name="Blattner F.R."/>
        </authorList>
    </citation>
    <scope>NUCLEOTIDE SEQUENCE [LARGE SCALE GENOMIC DNA]</scope>
    <source>
        <strain>CFT073 / ATCC 700928 / UPEC</strain>
    </source>
</reference>
<name>YCFP_ECOL6</name>